<protein>
    <recommendedName>
        <fullName evidence="1">Large ribosomal subunit protein bL19</fullName>
    </recommendedName>
    <alternativeName>
        <fullName evidence="2">50S ribosomal protein L19</fullName>
    </alternativeName>
</protein>
<gene>
    <name evidence="1" type="primary">rplS</name>
    <name type="ordered locus">FRAAL5789</name>
</gene>
<name>RL19_FRAAA</name>
<evidence type="ECO:0000255" key="1">
    <source>
        <dbReference type="HAMAP-Rule" id="MF_00402"/>
    </source>
</evidence>
<evidence type="ECO:0000305" key="2"/>
<keyword id="KW-1185">Reference proteome</keyword>
<keyword id="KW-0687">Ribonucleoprotein</keyword>
<keyword id="KW-0689">Ribosomal protein</keyword>
<dbReference type="EMBL" id="CT573213">
    <property type="protein sequence ID" value="CAJ64421.1"/>
    <property type="molecule type" value="Genomic_DNA"/>
</dbReference>
<dbReference type="RefSeq" id="WP_011606861.1">
    <property type="nucleotide sequence ID" value="NC_008278.1"/>
</dbReference>
<dbReference type="SMR" id="Q0RDP5"/>
<dbReference type="STRING" id="326424.FRAAL5789"/>
<dbReference type="KEGG" id="fal:FRAAL5789"/>
<dbReference type="eggNOG" id="COG0335">
    <property type="taxonomic scope" value="Bacteria"/>
</dbReference>
<dbReference type="HOGENOM" id="CLU_103507_2_1_11"/>
<dbReference type="OrthoDB" id="9803541at2"/>
<dbReference type="Proteomes" id="UP000000657">
    <property type="component" value="Chromosome"/>
</dbReference>
<dbReference type="GO" id="GO:0022625">
    <property type="term" value="C:cytosolic large ribosomal subunit"/>
    <property type="evidence" value="ECO:0007669"/>
    <property type="project" value="TreeGrafter"/>
</dbReference>
<dbReference type="GO" id="GO:0003735">
    <property type="term" value="F:structural constituent of ribosome"/>
    <property type="evidence" value="ECO:0007669"/>
    <property type="project" value="InterPro"/>
</dbReference>
<dbReference type="GO" id="GO:0006412">
    <property type="term" value="P:translation"/>
    <property type="evidence" value="ECO:0007669"/>
    <property type="project" value="UniProtKB-UniRule"/>
</dbReference>
<dbReference type="FunFam" id="2.30.30.790:FF:000001">
    <property type="entry name" value="50S ribosomal protein L19"/>
    <property type="match status" value="1"/>
</dbReference>
<dbReference type="Gene3D" id="2.30.30.790">
    <property type="match status" value="1"/>
</dbReference>
<dbReference type="HAMAP" id="MF_00402">
    <property type="entry name" value="Ribosomal_bL19"/>
    <property type="match status" value="1"/>
</dbReference>
<dbReference type="InterPro" id="IPR001857">
    <property type="entry name" value="Ribosomal_bL19"/>
</dbReference>
<dbReference type="InterPro" id="IPR018257">
    <property type="entry name" value="Ribosomal_bL19_CS"/>
</dbReference>
<dbReference type="InterPro" id="IPR038657">
    <property type="entry name" value="Ribosomal_bL19_sf"/>
</dbReference>
<dbReference type="InterPro" id="IPR008991">
    <property type="entry name" value="Translation_prot_SH3-like_sf"/>
</dbReference>
<dbReference type="NCBIfam" id="TIGR01024">
    <property type="entry name" value="rplS_bact"/>
    <property type="match status" value="1"/>
</dbReference>
<dbReference type="PANTHER" id="PTHR15680:SF9">
    <property type="entry name" value="LARGE RIBOSOMAL SUBUNIT PROTEIN BL19M"/>
    <property type="match status" value="1"/>
</dbReference>
<dbReference type="PANTHER" id="PTHR15680">
    <property type="entry name" value="RIBOSOMAL PROTEIN L19"/>
    <property type="match status" value="1"/>
</dbReference>
<dbReference type="Pfam" id="PF01245">
    <property type="entry name" value="Ribosomal_L19"/>
    <property type="match status" value="1"/>
</dbReference>
<dbReference type="PIRSF" id="PIRSF002191">
    <property type="entry name" value="Ribosomal_L19"/>
    <property type="match status" value="1"/>
</dbReference>
<dbReference type="PRINTS" id="PR00061">
    <property type="entry name" value="RIBOSOMALL19"/>
</dbReference>
<dbReference type="SUPFAM" id="SSF50104">
    <property type="entry name" value="Translation proteins SH3-like domain"/>
    <property type="match status" value="1"/>
</dbReference>
<dbReference type="PROSITE" id="PS01015">
    <property type="entry name" value="RIBOSOMAL_L19"/>
    <property type="match status" value="1"/>
</dbReference>
<comment type="function">
    <text evidence="1">This protein is located at the 30S-50S ribosomal subunit interface and may play a role in the structure and function of the aminoacyl-tRNA binding site.</text>
</comment>
<comment type="similarity">
    <text evidence="1">Belongs to the bacterial ribosomal protein bL19 family.</text>
</comment>
<organism>
    <name type="scientific">Frankia alni (strain DSM 45986 / CECT 9034 / ACN14a)</name>
    <dbReference type="NCBI Taxonomy" id="326424"/>
    <lineage>
        <taxon>Bacteria</taxon>
        <taxon>Bacillati</taxon>
        <taxon>Actinomycetota</taxon>
        <taxon>Actinomycetes</taxon>
        <taxon>Frankiales</taxon>
        <taxon>Frankiaceae</taxon>
        <taxon>Frankia</taxon>
    </lineage>
</organism>
<reference key="1">
    <citation type="journal article" date="2007" name="Genome Res.">
        <title>Genome characteristics of facultatively symbiotic Frankia sp. strains reflect host range and host plant biogeography.</title>
        <authorList>
            <person name="Normand P."/>
            <person name="Lapierre P."/>
            <person name="Tisa L.S."/>
            <person name="Gogarten J.P."/>
            <person name="Alloisio N."/>
            <person name="Bagnarol E."/>
            <person name="Bassi C.A."/>
            <person name="Berry A.M."/>
            <person name="Bickhart D.M."/>
            <person name="Choisne N."/>
            <person name="Couloux A."/>
            <person name="Cournoyer B."/>
            <person name="Cruveiller S."/>
            <person name="Daubin V."/>
            <person name="Demange N."/>
            <person name="Francino M.P."/>
            <person name="Goltsman E."/>
            <person name="Huang Y."/>
            <person name="Kopp O.R."/>
            <person name="Labarre L."/>
            <person name="Lapidus A."/>
            <person name="Lavire C."/>
            <person name="Marechal J."/>
            <person name="Martinez M."/>
            <person name="Mastronunzio J.E."/>
            <person name="Mullin B.C."/>
            <person name="Niemann J."/>
            <person name="Pujic P."/>
            <person name="Rawnsley T."/>
            <person name="Rouy Z."/>
            <person name="Schenowitz C."/>
            <person name="Sellstedt A."/>
            <person name="Tavares F."/>
            <person name="Tomkins J.P."/>
            <person name="Vallenet D."/>
            <person name="Valverde C."/>
            <person name="Wall L.G."/>
            <person name="Wang Y."/>
            <person name="Medigue C."/>
            <person name="Benson D.R."/>
        </authorList>
    </citation>
    <scope>NUCLEOTIDE SEQUENCE [LARGE SCALE GENOMIC DNA]</scope>
    <source>
        <strain>DSM 45986 / CECT 9034 / ACN14a</strain>
    </source>
</reference>
<feature type="chain" id="PRO_1000049675" description="Large ribosomal subunit protein bL19">
    <location>
        <begin position="1"/>
        <end position="118"/>
    </location>
</feature>
<proteinExistence type="inferred from homology"/>
<accession>Q0RDP5</accession>
<sequence length="118" mass="13509">MHTLDSLDAESLRTDVPEFWPGDTLKVHVRVVEGNRQRIQVFQGAVIRRQGGGVRETFTVRKVSFGVGVERTFPLHSPIVSKIEIVTRGDVRRAKLYYLRQLRGKAAKIKEKRDPISR</sequence>